<reference key="1">
    <citation type="journal article" date="1998" name="DNA Res.">
        <title>Structural analysis of Arabidopsis thaliana chromosome 5. V. Sequence features of the regions of 1,381,565 bp covered by twenty one physically assigned P1 and TAC clones.</title>
        <authorList>
            <person name="Kaneko T."/>
            <person name="Kotani H."/>
            <person name="Nakamura Y."/>
            <person name="Sato S."/>
            <person name="Asamizu E."/>
            <person name="Miyajima N."/>
            <person name="Tabata S."/>
        </authorList>
    </citation>
    <scope>NUCLEOTIDE SEQUENCE [LARGE SCALE GENOMIC DNA]</scope>
    <source>
        <strain>cv. Columbia</strain>
    </source>
</reference>
<reference key="2">
    <citation type="journal article" date="2017" name="Plant J.">
        <title>Araport11: a complete reannotation of the Arabidopsis thaliana reference genome.</title>
        <authorList>
            <person name="Cheng C.Y."/>
            <person name="Krishnakumar V."/>
            <person name="Chan A.P."/>
            <person name="Thibaud-Nissen F."/>
            <person name="Schobel S."/>
            <person name="Town C.D."/>
        </authorList>
    </citation>
    <scope>GENOME REANNOTATION</scope>
    <source>
        <strain>cv. Columbia</strain>
    </source>
</reference>
<reference key="3">
    <citation type="journal article" date="2012" name="Nature">
        <title>A novel putative auxin carrier family regulates intracellular auxin homeostasis in plants.</title>
        <authorList>
            <person name="Barbez E."/>
            <person name="Kubes M."/>
            <person name="Rolcik J."/>
            <person name="Beziat C."/>
            <person name="Pencik A."/>
            <person name="Wang B."/>
            <person name="Rosquete M.R."/>
            <person name="Zhu J."/>
            <person name="Dobrev P.I."/>
            <person name="Lee Y."/>
            <person name="Zazimalova E."/>
            <person name="Petrasek J."/>
            <person name="Geisler M."/>
            <person name="Friml J."/>
            <person name="Kleine-Vehn J."/>
        </authorList>
    </citation>
    <scope>FUNCTION</scope>
    <scope>TISSUE SPECIFICITY</scope>
    <scope>INDUCTION BY AUXIN</scope>
    <scope>GENE FAMILY</scope>
    <scope>NOMENCLATURE</scope>
    <scope>SUBCELLULAR LOCATION</scope>
</reference>
<reference key="4">
    <citation type="journal article" date="2012" name="Front. Plant Sci.">
        <title>Evolution and structural diversification of PILS putative auxin carriers in plants.</title>
        <authorList>
            <person name="Feraru E."/>
            <person name="Vosolsobe S."/>
            <person name="Feraru M.I."/>
            <person name="Petrasek J."/>
            <person name="Kleine-Vehn J."/>
        </authorList>
    </citation>
    <scope>GENE FAMILY</scope>
    <scope>NOMENCLATURE</scope>
</reference>
<protein>
    <recommendedName>
        <fullName evidence="3">Protein PIN-LIKES 7</fullName>
    </recommendedName>
    <alternativeName>
        <fullName evidence="3">Auxin efflux carrier-like protein 7</fullName>
    </alternativeName>
</protein>
<sequence>MGFLELLEVASMPIVQVLLISVLGAFLATDYCSLLSADTRRSVNKLVFVVFTPCIMFANLAETVTLQDIISWWFMPINVGITFLVGGILGWLVVKLLNPKPQLHGLIIATCASGNMGNLMLILVPAICDEEGSPFGNRSVCRSIGLSYASFSMALGGFYIWTYSYQLVRSSATQFRALEAAGLVKSPNKDIDSDPHALLLKPHQNQDLEIQGKQKVSTRTYIKDLLHQILEELFAPPTIGAILGFVFGATNWLRNLIIGENAPLRVIQDSVKLLGEGTIPCITLILGGNLIQGLRSSAVKKSVIVGVIIVRYILLPVVGVGVVQLAGNLGYLPPDPLFRYVLMLQFALPPAMNISTMAQLFDVAQDECSVIFLWTYLVASLALTVWSTIFLSILS</sequence>
<name>PILS7_ARATH</name>
<comment type="function">
    <text evidence="2">Involved in cellular auxin homeostasis by regulating auxin metabolism. Regulates intracellular auxin accumulation at the endoplasmic reticulum and thus auxin availability for nuclear auxin signaling.</text>
</comment>
<comment type="subcellular location">
    <subcellularLocation>
        <location evidence="2">Endoplasmic reticulum membrane</location>
        <topology evidence="4">Multi-pass membrane protein</topology>
    </subcellularLocation>
</comment>
<comment type="tissue specificity">
    <text evidence="2">Expressed in seedlings, rosette and cauline leaves, stems and flowers.</text>
</comment>
<comment type="induction">
    <text evidence="2">Up-regulated by auxin application.</text>
</comment>
<comment type="similarity">
    <text evidence="4">Belongs to the auxin efflux carrier (TC 2.A.69.2) family.</text>
</comment>
<evidence type="ECO:0000255" key="1"/>
<evidence type="ECO:0000269" key="2">
    <source>
    </source>
</evidence>
<evidence type="ECO:0000303" key="3">
    <source>
    </source>
</evidence>
<evidence type="ECO:0000305" key="4"/>
<evidence type="ECO:0000305" key="5">
    <source>
    </source>
</evidence>
<evidence type="ECO:0000312" key="6">
    <source>
        <dbReference type="Araport" id="AT5G65980"/>
    </source>
</evidence>
<evidence type="ECO:0000312" key="7">
    <source>
        <dbReference type="EMBL" id="BAB10403.1"/>
    </source>
</evidence>
<gene>
    <name evidence="3" type="primary">PILS7</name>
    <name evidence="6" type="ordered locus">At5g65980</name>
    <name evidence="7" type="ORF">K2A18.4</name>
</gene>
<keyword id="KW-0927">Auxin signaling pathway</keyword>
<keyword id="KW-0256">Endoplasmic reticulum</keyword>
<keyword id="KW-0472">Membrane</keyword>
<keyword id="KW-1185">Reference proteome</keyword>
<keyword id="KW-0812">Transmembrane</keyword>
<keyword id="KW-1133">Transmembrane helix</keyword>
<keyword id="KW-0813">Transport</keyword>
<accession>Q9FKY4</accession>
<proteinExistence type="evidence at transcript level"/>
<feature type="chain" id="PRO_0000436502" description="Protein PIN-LIKES 7">
    <location>
        <begin position="1"/>
        <end position="395"/>
    </location>
</feature>
<feature type="topological domain" description="Lumenal" evidence="5">
    <location>
        <begin position="1"/>
        <end position="8"/>
    </location>
</feature>
<feature type="transmembrane region" description="Helical" evidence="1">
    <location>
        <begin position="9"/>
        <end position="29"/>
    </location>
</feature>
<feature type="topological domain" description="Cytoplasmic" evidence="5">
    <location>
        <begin position="30"/>
        <end position="45"/>
    </location>
</feature>
<feature type="transmembrane region" description="Helical" evidence="1">
    <location>
        <begin position="46"/>
        <end position="66"/>
    </location>
</feature>
<feature type="topological domain" description="Lumenal" evidence="5">
    <location>
        <begin position="67"/>
        <end position="73"/>
    </location>
</feature>
<feature type="transmembrane region" description="Helical" evidence="1">
    <location>
        <begin position="74"/>
        <end position="94"/>
    </location>
</feature>
<feature type="topological domain" description="Cytoplasmic" evidence="5">
    <location>
        <begin position="95"/>
        <end position="106"/>
    </location>
</feature>
<feature type="transmembrane region" description="Helical" evidence="1">
    <location>
        <begin position="107"/>
        <end position="127"/>
    </location>
</feature>
<feature type="topological domain" description="Lumenal" evidence="5">
    <location>
        <begin position="128"/>
        <end position="142"/>
    </location>
</feature>
<feature type="transmembrane region" description="Helical" evidence="1">
    <location>
        <begin position="143"/>
        <end position="163"/>
    </location>
</feature>
<feature type="topological domain" description="Cytoplasmic" evidence="5">
    <location>
        <begin position="164"/>
        <end position="232"/>
    </location>
</feature>
<feature type="transmembrane region" description="Helical" evidence="1">
    <location>
        <begin position="233"/>
        <end position="253"/>
    </location>
</feature>
<feature type="topological domain" description="Lumenal" evidence="5">
    <location>
        <begin position="254"/>
        <end position="272"/>
    </location>
</feature>
<feature type="transmembrane region" description="Helical" evidence="1">
    <location>
        <begin position="273"/>
        <end position="293"/>
    </location>
</feature>
<feature type="topological domain" description="Cytoplasmic" evidence="5">
    <location>
        <begin position="294"/>
        <end position="302"/>
    </location>
</feature>
<feature type="transmembrane region" description="Helical" evidence="1">
    <location>
        <begin position="303"/>
        <end position="323"/>
    </location>
</feature>
<feature type="topological domain" description="Lumenal" evidence="5">
    <location>
        <begin position="324"/>
        <end position="340"/>
    </location>
</feature>
<feature type="transmembrane region" description="Helical" evidence="1">
    <location>
        <begin position="341"/>
        <end position="361"/>
    </location>
</feature>
<feature type="topological domain" description="Cytoplasmic" evidence="5">
    <location>
        <begin position="362"/>
        <end position="369"/>
    </location>
</feature>
<feature type="transmembrane region" description="Helical" evidence="1">
    <location>
        <begin position="370"/>
        <end position="390"/>
    </location>
</feature>
<feature type="topological domain" description="Lumenal" evidence="5">
    <location>
        <begin position="391"/>
        <end position="395"/>
    </location>
</feature>
<organism>
    <name type="scientific">Arabidopsis thaliana</name>
    <name type="common">Mouse-ear cress</name>
    <dbReference type="NCBI Taxonomy" id="3702"/>
    <lineage>
        <taxon>Eukaryota</taxon>
        <taxon>Viridiplantae</taxon>
        <taxon>Streptophyta</taxon>
        <taxon>Embryophyta</taxon>
        <taxon>Tracheophyta</taxon>
        <taxon>Spermatophyta</taxon>
        <taxon>Magnoliopsida</taxon>
        <taxon>eudicotyledons</taxon>
        <taxon>Gunneridae</taxon>
        <taxon>Pentapetalae</taxon>
        <taxon>rosids</taxon>
        <taxon>malvids</taxon>
        <taxon>Brassicales</taxon>
        <taxon>Brassicaceae</taxon>
        <taxon>Camelineae</taxon>
        <taxon>Arabidopsis</taxon>
    </lineage>
</organism>
<dbReference type="EMBL" id="AB011474">
    <property type="protein sequence ID" value="BAB10403.1"/>
    <property type="molecule type" value="Genomic_DNA"/>
</dbReference>
<dbReference type="EMBL" id="CP002688">
    <property type="protein sequence ID" value="AED98134.1"/>
    <property type="molecule type" value="Genomic_DNA"/>
</dbReference>
<dbReference type="RefSeq" id="NP_201399.1">
    <property type="nucleotide sequence ID" value="NM_125995.2"/>
</dbReference>
<dbReference type="SMR" id="Q9FKY4"/>
<dbReference type="FunCoup" id="Q9FKY4">
    <property type="interactions" value="128"/>
</dbReference>
<dbReference type="STRING" id="3702.Q9FKY4"/>
<dbReference type="PaxDb" id="3702-AT5G65980.1"/>
<dbReference type="ProteomicsDB" id="234909"/>
<dbReference type="EnsemblPlants" id="AT5G65980.1">
    <property type="protein sequence ID" value="AT5G65980.1"/>
    <property type="gene ID" value="AT5G65980"/>
</dbReference>
<dbReference type="GeneID" id="836728"/>
<dbReference type="Gramene" id="AT5G65980.1">
    <property type="protein sequence ID" value="AT5G65980.1"/>
    <property type="gene ID" value="AT5G65980"/>
</dbReference>
<dbReference type="KEGG" id="ath:AT5G65980"/>
<dbReference type="Araport" id="AT5G65980"/>
<dbReference type="TAIR" id="AT5G65980">
    <property type="gene designation" value="PILS7"/>
</dbReference>
<dbReference type="eggNOG" id="KOG2722">
    <property type="taxonomic scope" value="Eukaryota"/>
</dbReference>
<dbReference type="HOGENOM" id="CLU_044945_0_0_1"/>
<dbReference type="InParanoid" id="Q9FKY4"/>
<dbReference type="OMA" id="PAICKEN"/>
<dbReference type="OrthoDB" id="191139at2759"/>
<dbReference type="PhylomeDB" id="Q9FKY4"/>
<dbReference type="PRO" id="PR:Q9FKY4"/>
<dbReference type="Proteomes" id="UP000006548">
    <property type="component" value="Chromosome 5"/>
</dbReference>
<dbReference type="ExpressionAtlas" id="Q9FKY4">
    <property type="expression patterns" value="baseline and differential"/>
</dbReference>
<dbReference type="GO" id="GO:0005789">
    <property type="term" value="C:endoplasmic reticulum membrane"/>
    <property type="evidence" value="ECO:0000314"/>
    <property type="project" value="UniProtKB"/>
</dbReference>
<dbReference type="GO" id="GO:0009734">
    <property type="term" value="P:auxin-activated signaling pathway"/>
    <property type="evidence" value="ECO:0007669"/>
    <property type="project" value="UniProtKB-KW"/>
</dbReference>
<dbReference type="GO" id="GO:0080162">
    <property type="term" value="P:endoplasmic reticulum to cytosol auxin transport"/>
    <property type="evidence" value="ECO:0007669"/>
    <property type="project" value="InterPro"/>
</dbReference>
<dbReference type="GO" id="GO:0009733">
    <property type="term" value="P:response to auxin"/>
    <property type="evidence" value="ECO:0000270"/>
    <property type="project" value="UniProtKB"/>
</dbReference>
<dbReference type="InterPro" id="IPR004776">
    <property type="entry name" value="Mem_transp_PIN-like"/>
</dbReference>
<dbReference type="InterPro" id="IPR045033">
    <property type="entry name" value="PILS1/3/4/5/7"/>
</dbReference>
<dbReference type="PANTHER" id="PTHR31651">
    <property type="match status" value="1"/>
</dbReference>
<dbReference type="PANTHER" id="PTHR31651:SF3">
    <property type="entry name" value="PROTEIN PIN-LIKES 7"/>
    <property type="match status" value="1"/>
</dbReference>
<dbReference type="Pfam" id="PF03547">
    <property type="entry name" value="Mem_trans"/>
    <property type="match status" value="1"/>
</dbReference>